<gene>
    <name evidence="1" type="primary">cbpA</name>
    <name type="ordered locus">ECH74115_1236</name>
</gene>
<feature type="chain" id="PRO_1000137746" description="Curved DNA-binding protein">
    <location>
        <begin position="1"/>
        <end position="306"/>
    </location>
</feature>
<feature type="domain" description="J" evidence="1">
    <location>
        <begin position="5"/>
        <end position="69"/>
    </location>
</feature>
<organism>
    <name type="scientific">Escherichia coli O157:H7 (strain EC4115 / EHEC)</name>
    <dbReference type="NCBI Taxonomy" id="444450"/>
    <lineage>
        <taxon>Bacteria</taxon>
        <taxon>Pseudomonadati</taxon>
        <taxon>Pseudomonadota</taxon>
        <taxon>Gammaproteobacteria</taxon>
        <taxon>Enterobacterales</taxon>
        <taxon>Enterobacteriaceae</taxon>
        <taxon>Escherichia</taxon>
    </lineage>
</organism>
<proteinExistence type="inferred from homology"/>
<comment type="function">
    <text evidence="1">DNA-binding protein that preferentially recognizes a curved DNA sequence. It is probably a functional analog of DnaJ; displays overlapping activities with DnaJ, but functions under different conditions, probably acting as a molecular chaperone in an adaptive response to environmental stresses other than heat shock. Lacks autonomous chaperone activity; binds native substrates and targets them for recognition by DnaK. Its activity is inhibited by the binding of CbpM.</text>
</comment>
<comment type="subcellular location">
    <subcellularLocation>
        <location evidence="1">Cytoplasm</location>
        <location evidence="1">Nucleoid</location>
    </subcellularLocation>
</comment>
<reference key="1">
    <citation type="journal article" date="2011" name="Proc. Natl. Acad. Sci. U.S.A.">
        <title>Genomic anatomy of Escherichia coli O157:H7 outbreaks.</title>
        <authorList>
            <person name="Eppinger M."/>
            <person name="Mammel M.K."/>
            <person name="Leclerc J.E."/>
            <person name="Ravel J."/>
            <person name="Cebula T.A."/>
        </authorList>
    </citation>
    <scope>NUCLEOTIDE SEQUENCE [LARGE SCALE GENOMIC DNA]</scope>
    <source>
        <strain>EC4115 / EHEC</strain>
    </source>
</reference>
<name>CBPA_ECO5E</name>
<evidence type="ECO:0000255" key="1">
    <source>
        <dbReference type="HAMAP-Rule" id="MF_01154"/>
    </source>
</evidence>
<keyword id="KW-0143">Chaperone</keyword>
<keyword id="KW-0963">Cytoplasm</keyword>
<keyword id="KW-0238">DNA-binding</keyword>
<dbReference type="EMBL" id="CP001164">
    <property type="protein sequence ID" value="ACI36953.1"/>
    <property type="molecule type" value="Genomic_DNA"/>
</dbReference>
<dbReference type="RefSeq" id="WP_000420639.1">
    <property type="nucleotide sequence ID" value="NC_011353.1"/>
</dbReference>
<dbReference type="SMR" id="B5YU43"/>
<dbReference type="KEGG" id="ecf:ECH74115_1236"/>
<dbReference type="HOGENOM" id="CLU_017633_0_0_6"/>
<dbReference type="GO" id="GO:0005737">
    <property type="term" value="C:cytoplasm"/>
    <property type="evidence" value="ECO:0007669"/>
    <property type="project" value="UniProtKB-UniRule"/>
</dbReference>
<dbReference type="GO" id="GO:0009295">
    <property type="term" value="C:nucleoid"/>
    <property type="evidence" value="ECO:0007669"/>
    <property type="project" value="UniProtKB-SubCell"/>
</dbReference>
<dbReference type="GO" id="GO:0003681">
    <property type="term" value="F:bent DNA binding"/>
    <property type="evidence" value="ECO:0007669"/>
    <property type="project" value="UniProtKB-UniRule"/>
</dbReference>
<dbReference type="GO" id="GO:0051082">
    <property type="term" value="F:unfolded protein binding"/>
    <property type="evidence" value="ECO:0007669"/>
    <property type="project" value="InterPro"/>
</dbReference>
<dbReference type="GO" id="GO:0051085">
    <property type="term" value="P:chaperone cofactor-dependent protein refolding"/>
    <property type="evidence" value="ECO:0007669"/>
    <property type="project" value="TreeGrafter"/>
</dbReference>
<dbReference type="GO" id="GO:0042026">
    <property type="term" value="P:protein refolding"/>
    <property type="evidence" value="ECO:0007669"/>
    <property type="project" value="TreeGrafter"/>
</dbReference>
<dbReference type="CDD" id="cd06257">
    <property type="entry name" value="DnaJ"/>
    <property type="match status" value="1"/>
</dbReference>
<dbReference type="CDD" id="cd10747">
    <property type="entry name" value="DnaJ_C"/>
    <property type="match status" value="1"/>
</dbReference>
<dbReference type="FunFam" id="1.10.287.110:FF:000013">
    <property type="entry name" value="Curved DNA-binding protein"/>
    <property type="match status" value="1"/>
</dbReference>
<dbReference type="FunFam" id="2.60.260.20:FF:000008">
    <property type="entry name" value="Curved DNA-binding protein"/>
    <property type="match status" value="1"/>
</dbReference>
<dbReference type="FunFam" id="2.60.260.20:FF:000010">
    <property type="entry name" value="Curved DNA-binding protein"/>
    <property type="match status" value="1"/>
</dbReference>
<dbReference type="Gene3D" id="1.10.287.110">
    <property type="entry name" value="DnaJ domain"/>
    <property type="match status" value="1"/>
</dbReference>
<dbReference type="Gene3D" id="1.20.5.460">
    <property type="entry name" value="Single helix bin"/>
    <property type="match status" value="1"/>
</dbReference>
<dbReference type="Gene3D" id="2.60.260.20">
    <property type="entry name" value="Urease metallochaperone UreE, N-terminal domain"/>
    <property type="match status" value="2"/>
</dbReference>
<dbReference type="HAMAP" id="MF_01154">
    <property type="entry name" value="CbpA"/>
    <property type="match status" value="1"/>
</dbReference>
<dbReference type="InterPro" id="IPR023859">
    <property type="entry name" value="DNA-bd_curved-DNA"/>
</dbReference>
<dbReference type="InterPro" id="IPR002939">
    <property type="entry name" value="DnaJ_C"/>
</dbReference>
<dbReference type="InterPro" id="IPR001623">
    <property type="entry name" value="DnaJ_domain"/>
</dbReference>
<dbReference type="InterPro" id="IPR018253">
    <property type="entry name" value="DnaJ_domain_CS"/>
</dbReference>
<dbReference type="InterPro" id="IPR008971">
    <property type="entry name" value="HSP40/DnaJ_pept-bd"/>
</dbReference>
<dbReference type="InterPro" id="IPR036869">
    <property type="entry name" value="J_dom_sf"/>
</dbReference>
<dbReference type="NCBIfam" id="NF007618">
    <property type="entry name" value="PRK10266.1"/>
    <property type="match status" value="1"/>
</dbReference>
<dbReference type="PANTHER" id="PTHR43096">
    <property type="entry name" value="DNAJ HOMOLOG 1, MITOCHONDRIAL-RELATED"/>
    <property type="match status" value="1"/>
</dbReference>
<dbReference type="PANTHER" id="PTHR43096:SF52">
    <property type="entry name" value="DNAJ HOMOLOG 1, MITOCHONDRIAL-RELATED"/>
    <property type="match status" value="1"/>
</dbReference>
<dbReference type="Pfam" id="PF00226">
    <property type="entry name" value="DnaJ"/>
    <property type="match status" value="1"/>
</dbReference>
<dbReference type="Pfam" id="PF01556">
    <property type="entry name" value="DnaJ_C"/>
    <property type="match status" value="1"/>
</dbReference>
<dbReference type="PRINTS" id="PR00625">
    <property type="entry name" value="JDOMAIN"/>
</dbReference>
<dbReference type="SMART" id="SM00271">
    <property type="entry name" value="DnaJ"/>
    <property type="match status" value="1"/>
</dbReference>
<dbReference type="SUPFAM" id="SSF46565">
    <property type="entry name" value="Chaperone J-domain"/>
    <property type="match status" value="1"/>
</dbReference>
<dbReference type="SUPFAM" id="SSF49493">
    <property type="entry name" value="HSP40/DnaJ peptide-binding domain"/>
    <property type="match status" value="2"/>
</dbReference>
<dbReference type="PROSITE" id="PS00636">
    <property type="entry name" value="DNAJ_1"/>
    <property type="match status" value="1"/>
</dbReference>
<dbReference type="PROSITE" id="PS50076">
    <property type="entry name" value="DNAJ_2"/>
    <property type="match status" value="1"/>
</dbReference>
<accession>B5YU43</accession>
<protein>
    <recommendedName>
        <fullName evidence="1">Curved DNA-binding protein</fullName>
    </recommendedName>
</protein>
<sequence length="306" mass="34389">MELKDYYAIMGVKPTDDLKTIKTAYRRLARKYHPDVSKEPDAEARFKEVAEAWEVLSDEQRRAEYDQMWQHRNDPQFSRQFQHGDGQSFNAEDFDDIFSSIFGQHARQSRQRPAARGHDIEIEVAVFLEETLTEHKRTISYNLPVYNAFGMIEQEIPKTLNVKIPAGVGNGQRIRLKGQGTPGENGGPNGDLWLVIHIAPHPLFDIVGQDLEIVVPVSPWEAALGAKVTVPTLKESILLTIPPGSQAGQRLRVKGKGLVSKKQTGDLYAVLKIVMPPKPDENTAALWQQLADAQSSFDPRKDWGKA</sequence>